<name>YGFZ_SALHS</name>
<sequence length="326" mass="36015">MAFISFPPRHPSSSARLPLTLIALDDWALSTITGVDSEKYIQGQVTADVSQMTEQQHLLAAHCDAKGKMWSTLRLFRERDGFAWIERRSVREAQLTELKKYAVFSKVVIAPDDERVLLGVAGFQARAALANVFSELPNSENQVVRDGASTLLWFEHPAERFLLVTDVATANMLTEKLHGEAELNNSQQWLALDIEAGIPVIDAANSGQFIPQATNLQALGGISFKKGCYTGQEMVARAKFRGANKRALWLLAGKASRVPEAGEDLELQMGENWRRTGAILAATQLDDGQLLVQAVMNNDLEAESVFRVRDDANTLHIVPLPYSLEE</sequence>
<comment type="function">
    <text evidence="1">Folate-binding protein involved in regulating the level of ATP-DnaA and in the modification of some tRNAs. It is probably a key factor in regulatory networks that act via tRNA modification, such as initiation of chromosomal replication.</text>
</comment>
<comment type="subcellular location">
    <subcellularLocation>
        <location evidence="1">Cytoplasm</location>
    </subcellularLocation>
</comment>
<comment type="similarity">
    <text evidence="1">Belongs to the tRNA-modifying YgfZ family.</text>
</comment>
<proteinExistence type="inferred from homology"/>
<accession>B4TGW8</accession>
<keyword id="KW-0963">Cytoplasm</keyword>
<keyword id="KW-0290">Folate-binding</keyword>
<keyword id="KW-0819">tRNA processing</keyword>
<evidence type="ECO:0000255" key="1">
    <source>
        <dbReference type="HAMAP-Rule" id="MF_01175"/>
    </source>
</evidence>
<organism>
    <name type="scientific">Salmonella heidelberg (strain SL476)</name>
    <dbReference type="NCBI Taxonomy" id="454169"/>
    <lineage>
        <taxon>Bacteria</taxon>
        <taxon>Pseudomonadati</taxon>
        <taxon>Pseudomonadota</taxon>
        <taxon>Gammaproteobacteria</taxon>
        <taxon>Enterobacterales</taxon>
        <taxon>Enterobacteriaceae</taxon>
        <taxon>Salmonella</taxon>
    </lineage>
</organism>
<dbReference type="EMBL" id="CP001120">
    <property type="protein sequence ID" value="ACF68245.1"/>
    <property type="molecule type" value="Genomic_DNA"/>
</dbReference>
<dbReference type="RefSeq" id="WP_000874176.1">
    <property type="nucleotide sequence ID" value="NC_011083.1"/>
</dbReference>
<dbReference type="SMR" id="B4TGW8"/>
<dbReference type="KEGG" id="seh:SeHA_C3280"/>
<dbReference type="HOGENOM" id="CLU_007884_6_1_6"/>
<dbReference type="Proteomes" id="UP000001866">
    <property type="component" value="Chromosome"/>
</dbReference>
<dbReference type="GO" id="GO:0005737">
    <property type="term" value="C:cytoplasm"/>
    <property type="evidence" value="ECO:0007669"/>
    <property type="project" value="UniProtKB-SubCell"/>
</dbReference>
<dbReference type="GO" id="GO:0005542">
    <property type="term" value="F:folic acid binding"/>
    <property type="evidence" value="ECO:0007669"/>
    <property type="project" value="UniProtKB-UniRule"/>
</dbReference>
<dbReference type="GO" id="GO:0016226">
    <property type="term" value="P:iron-sulfur cluster assembly"/>
    <property type="evidence" value="ECO:0007669"/>
    <property type="project" value="TreeGrafter"/>
</dbReference>
<dbReference type="GO" id="GO:0009451">
    <property type="term" value="P:RNA modification"/>
    <property type="evidence" value="ECO:0007669"/>
    <property type="project" value="InterPro"/>
</dbReference>
<dbReference type="GO" id="GO:0008033">
    <property type="term" value="P:tRNA processing"/>
    <property type="evidence" value="ECO:0007669"/>
    <property type="project" value="UniProtKB-UniRule"/>
</dbReference>
<dbReference type="FunFam" id="2.40.30.160:FF:000001">
    <property type="entry name" value="tRNA-modifying protein YgfZ"/>
    <property type="match status" value="1"/>
</dbReference>
<dbReference type="FunFam" id="3.30.70.1400:FF:000002">
    <property type="entry name" value="tRNA-modifying protein YgfZ"/>
    <property type="match status" value="1"/>
</dbReference>
<dbReference type="FunFam" id="3.30.70.1630:FF:000001">
    <property type="entry name" value="tRNA-modifying protein YgfZ"/>
    <property type="match status" value="1"/>
</dbReference>
<dbReference type="Gene3D" id="2.40.30.160">
    <property type="match status" value="1"/>
</dbReference>
<dbReference type="Gene3D" id="3.30.70.1630">
    <property type="match status" value="1"/>
</dbReference>
<dbReference type="Gene3D" id="3.30.70.1400">
    <property type="entry name" value="Aminomethyltransferase beta-barrel domains"/>
    <property type="match status" value="1"/>
</dbReference>
<dbReference type="HAMAP" id="MF_01175">
    <property type="entry name" value="tRNA_modifying_YgfZ"/>
    <property type="match status" value="1"/>
</dbReference>
<dbReference type="InterPro" id="IPR006222">
    <property type="entry name" value="GCV_T_N"/>
</dbReference>
<dbReference type="InterPro" id="IPR029043">
    <property type="entry name" value="GcvT/YgfZ_C"/>
</dbReference>
<dbReference type="InterPro" id="IPR023758">
    <property type="entry name" value="tRNA-modifying_YgfZ"/>
</dbReference>
<dbReference type="InterPro" id="IPR045179">
    <property type="entry name" value="YgfZ/GcvT"/>
</dbReference>
<dbReference type="InterPro" id="IPR017703">
    <property type="entry name" value="YgfZ/GcvT_CS"/>
</dbReference>
<dbReference type="InterPro" id="IPR048451">
    <property type="entry name" value="YgfZ_barrel"/>
</dbReference>
<dbReference type="NCBIfam" id="NF007110">
    <property type="entry name" value="PRK09559.1"/>
    <property type="match status" value="1"/>
</dbReference>
<dbReference type="NCBIfam" id="TIGR03317">
    <property type="entry name" value="ygfZ_signature"/>
    <property type="match status" value="1"/>
</dbReference>
<dbReference type="PANTHER" id="PTHR22602">
    <property type="entry name" value="TRANSFERASE CAF17, MITOCHONDRIAL-RELATED"/>
    <property type="match status" value="1"/>
</dbReference>
<dbReference type="PANTHER" id="PTHR22602:SF0">
    <property type="entry name" value="TRANSFERASE CAF17, MITOCHONDRIAL-RELATED"/>
    <property type="match status" value="1"/>
</dbReference>
<dbReference type="Pfam" id="PF01571">
    <property type="entry name" value="GCV_T"/>
    <property type="match status" value="1"/>
</dbReference>
<dbReference type="Pfam" id="PF21130">
    <property type="entry name" value="YgfZ_barrel"/>
    <property type="match status" value="1"/>
</dbReference>
<dbReference type="SUPFAM" id="SSF101790">
    <property type="entry name" value="Aminomethyltransferase beta-barrel domain"/>
    <property type="match status" value="1"/>
</dbReference>
<dbReference type="SUPFAM" id="SSF103025">
    <property type="entry name" value="Folate-binding domain"/>
    <property type="match status" value="1"/>
</dbReference>
<gene>
    <name evidence="1" type="primary">ygfZ</name>
    <name type="ordered locus">SeHA_C3280</name>
</gene>
<reference key="1">
    <citation type="journal article" date="2011" name="J. Bacteriol.">
        <title>Comparative genomics of 28 Salmonella enterica isolates: evidence for CRISPR-mediated adaptive sublineage evolution.</title>
        <authorList>
            <person name="Fricke W.F."/>
            <person name="Mammel M.K."/>
            <person name="McDermott P.F."/>
            <person name="Tartera C."/>
            <person name="White D.G."/>
            <person name="Leclerc J.E."/>
            <person name="Ravel J."/>
            <person name="Cebula T.A."/>
        </authorList>
    </citation>
    <scope>NUCLEOTIDE SEQUENCE [LARGE SCALE GENOMIC DNA]</scope>
    <source>
        <strain>SL476</strain>
    </source>
</reference>
<feature type="chain" id="PRO_1000138083" description="tRNA-modifying protein YgfZ">
    <location>
        <begin position="1"/>
        <end position="326"/>
    </location>
</feature>
<feature type="binding site" evidence="1">
    <location>
        <position position="27"/>
    </location>
    <ligand>
        <name>folate</name>
        <dbReference type="ChEBI" id="CHEBI:62501"/>
    </ligand>
</feature>
<feature type="binding site" evidence="1">
    <location>
        <position position="189"/>
    </location>
    <ligand>
        <name>folate</name>
        <dbReference type="ChEBI" id="CHEBI:62501"/>
    </ligand>
</feature>
<protein>
    <recommendedName>
        <fullName evidence="1">tRNA-modifying protein YgfZ</fullName>
    </recommendedName>
</protein>